<proteinExistence type="inferred from homology"/>
<comment type="subcellular location">
    <subcellularLocation>
        <location evidence="2">Endoplasmic reticulum lumen</location>
    </subcellularLocation>
</comment>
<comment type="similarity">
    <text evidence="3">Belongs to the glycosyltransferase 25 family.</text>
</comment>
<accession>Q29NU5</accession>
<accession>I5AMN0</accession>
<protein>
    <recommendedName>
        <fullName>Glycosyltransferase 25 family member</fullName>
        <ecNumber>2.-.-.-</ecNumber>
    </recommendedName>
</protein>
<sequence length="626" mass="72334">MLKKQVFYGILLICAFVCIYGEDEDEKEAQDEYQPPTVLVALLVRNKAHILPMFLSYLEQQDYPKDRIAFWLRCDHSSDDSIDLLKQWLKHSGDLYHSVNYAFDSDGPHGYQNESSPYDWTVSRFKHVIALKEEAFTYARDIWADFVFFLDADVLLTSQQALRTLTALRLPIVAPMLLSESLYSNFWCGMTEEYYYQRTDEYKEIYHVKKQGSFPVPMVHTAVLVDMNHKGARNLTFDRQRLRDIQQSNQQLDQPLYEGPADDIIVFAMSANSSGIPLHVCNELTFGYILQPLEPGDTLEQDLQMLLNIRASMVSDLGAVPPVLEYFQPLIKTPEKTKLTLDHIFMINLERRPERRQKMENLFEEIGLQVEHFPAVDGKELNADRVQEMGIRFLPGYEDPYHHRAMTMGEIGCFLSHYRIWVRMVQLELKEVLILEDDIRFDPYFRANAVRVLNQARSVVEYDLIYFGRKRLKEESEPWVADADSLVHAGYSYWTLGYVLSLQGALKLLAAKPLEKLIPVDEFLPVMFDRHPNKTWTAAFKKRDLIALSAAPLLLYPIHYTGESGYISDTEDSQQINVQTTEGVARLKSDREQVFVKKGDDGILEQQLKMGESLSNVLPGKTHQEL</sequence>
<name>GLT25_DROPS</name>
<reference key="1">
    <citation type="journal article" date="2005" name="Genome Res.">
        <title>Comparative genome sequencing of Drosophila pseudoobscura: chromosomal, gene, and cis-element evolution.</title>
        <authorList>
            <person name="Richards S."/>
            <person name="Liu Y."/>
            <person name="Bettencourt B.R."/>
            <person name="Hradecky P."/>
            <person name="Letovsky S."/>
            <person name="Nielsen R."/>
            <person name="Thornton K."/>
            <person name="Hubisz M.J."/>
            <person name="Chen R."/>
            <person name="Meisel R.P."/>
            <person name="Couronne O."/>
            <person name="Hua S."/>
            <person name="Smith M.A."/>
            <person name="Zhang P."/>
            <person name="Liu J."/>
            <person name="Bussemaker H.J."/>
            <person name="van Batenburg M.F."/>
            <person name="Howells S.L."/>
            <person name="Scherer S.E."/>
            <person name="Sodergren E."/>
            <person name="Matthews B.B."/>
            <person name="Crosby M.A."/>
            <person name="Schroeder A.J."/>
            <person name="Ortiz-Barrientos D."/>
            <person name="Rives C.M."/>
            <person name="Metzker M.L."/>
            <person name="Muzny D.M."/>
            <person name="Scott G."/>
            <person name="Steffen D."/>
            <person name="Wheeler D.A."/>
            <person name="Worley K.C."/>
            <person name="Havlak P."/>
            <person name="Durbin K.J."/>
            <person name="Egan A."/>
            <person name="Gill R."/>
            <person name="Hume J."/>
            <person name="Morgan M.B."/>
            <person name="Miner G."/>
            <person name="Hamilton C."/>
            <person name="Huang Y."/>
            <person name="Waldron L."/>
            <person name="Verduzco D."/>
            <person name="Clerc-Blankenburg K.P."/>
            <person name="Dubchak I."/>
            <person name="Noor M.A.F."/>
            <person name="Anderson W."/>
            <person name="White K.P."/>
            <person name="Clark A.G."/>
            <person name="Schaeffer S.W."/>
            <person name="Gelbart W.M."/>
            <person name="Weinstock G.M."/>
            <person name="Gibbs R.A."/>
        </authorList>
    </citation>
    <scope>NUCLEOTIDE SEQUENCE [LARGE SCALE GENOMIC DNA]</scope>
    <source>
        <strain>MV2-25 / Tucson 14011-0121.94</strain>
    </source>
</reference>
<dbReference type="EC" id="2.-.-.-"/>
<dbReference type="EMBL" id="CH379058">
    <property type="protein sequence ID" value="EIM52215.1"/>
    <property type="molecule type" value="Genomic_DNA"/>
</dbReference>
<dbReference type="RefSeq" id="XP_003736142.1">
    <property type="nucleotide sequence ID" value="XM_003736094.2"/>
</dbReference>
<dbReference type="SMR" id="Q29NU5"/>
<dbReference type="FunCoup" id="Q29NU5">
    <property type="interactions" value="400"/>
</dbReference>
<dbReference type="STRING" id="46245.Q29NU5"/>
<dbReference type="EnsemblMetazoa" id="FBtr0301991">
    <property type="protein sequence ID" value="FBpp0291201"/>
    <property type="gene ID" value="FBgn0076576"/>
</dbReference>
<dbReference type="KEGG" id="dpo:4818107"/>
<dbReference type="eggNOG" id="KOG4179">
    <property type="taxonomic scope" value="Eukaryota"/>
</dbReference>
<dbReference type="HOGENOM" id="CLU_024037_2_0_1"/>
<dbReference type="InParanoid" id="Q29NU5"/>
<dbReference type="OMA" id="QRVYHYV"/>
<dbReference type="Proteomes" id="UP000001819">
    <property type="component" value="Chromosome 4"/>
</dbReference>
<dbReference type="Bgee" id="FBgn0076576">
    <property type="expression patterns" value="Expressed in female reproductive system and 2 other cell types or tissues"/>
</dbReference>
<dbReference type="GO" id="GO:0005788">
    <property type="term" value="C:endoplasmic reticulum lumen"/>
    <property type="evidence" value="ECO:0007669"/>
    <property type="project" value="UniProtKB-SubCell"/>
</dbReference>
<dbReference type="GO" id="GO:0050211">
    <property type="term" value="F:procollagen galactosyltransferase activity"/>
    <property type="evidence" value="ECO:0007669"/>
    <property type="project" value="TreeGrafter"/>
</dbReference>
<dbReference type="CDD" id="cd06532">
    <property type="entry name" value="Glyco_transf_25"/>
    <property type="match status" value="1"/>
</dbReference>
<dbReference type="Gene3D" id="3.90.550.10">
    <property type="entry name" value="Spore Coat Polysaccharide Biosynthesis Protein SpsA, Chain A"/>
    <property type="match status" value="1"/>
</dbReference>
<dbReference type="InterPro" id="IPR050757">
    <property type="entry name" value="Collagen_mod_GT25"/>
</dbReference>
<dbReference type="InterPro" id="IPR002654">
    <property type="entry name" value="Glyco_trans_25"/>
</dbReference>
<dbReference type="InterPro" id="IPR029044">
    <property type="entry name" value="Nucleotide-diphossugar_trans"/>
</dbReference>
<dbReference type="PANTHER" id="PTHR10730:SF53">
    <property type="entry name" value="GLYCOSYLTRANSFERASE 25 FAMILY MEMBER"/>
    <property type="match status" value="1"/>
</dbReference>
<dbReference type="PANTHER" id="PTHR10730">
    <property type="entry name" value="PROCOLLAGEN-LYSINE,2-OXOGLUTARATE 5-DIOXYGENASE/GLYCOSYLTRANSFERASE 25 FAMILY MEMBER"/>
    <property type="match status" value="1"/>
</dbReference>
<dbReference type="Pfam" id="PF01755">
    <property type="entry name" value="Glyco_transf_25"/>
    <property type="match status" value="1"/>
</dbReference>
<dbReference type="SUPFAM" id="SSF53448">
    <property type="entry name" value="Nucleotide-diphospho-sugar transferases"/>
    <property type="match status" value="1"/>
</dbReference>
<dbReference type="PROSITE" id="PS00014">
    <property type="entry name" value="ER_TARGET"/>
    <property type="match status" value="1"/>
</dbReference>
<evidence type="ECO:0000255" key="1"/>
<evidence type="ECO:0000255" key="2">
    <source>
        <dbReference type="PROSITE-ProRule" id="PRU10138"/>
    </source>
</evidence>
<evidence type="ECO:0000305" key="3"/>
<gene>
    <name type="ORF">GA16561</name>
</gene>
<organism>
    <name type="scientific">Drosophila pseudoobscura pseudoobscura</name>
    <name type="common">Fruit fly</name>
    <dbReference type="NCBI Taxonomy" id="46245"/>
    <lineage>
        <taxon>Eukaryota</taxon>
        <taxon>Metazoa</taxon>
        <taxon>Ecdysozoa</taxon>
        <taxon>Arthropoda</taxon>
        <taxon>Hexapoda</taxon>
        <taxon>Insecta</taxon>
        <taxon>Pterygota</taxon>
        <taxon>Neoptera</taxon>
        <taxon>Endopterygota</taxon>
        <taxon>Diptera</taxon>
        <taxon>Brachycera</taxon>
        <taxon>Muscomorpha</taxon>
        <taxon>Ephydroidea</taxon>
        <taxon>Drosophilidae</taxon>
        <taxon>Drosophila</taxon>
        <taxon>Sophophora</taxon>
    </lineage>
</organism>
<feature type="signal peptide" evidence="1">
    <location>
        <begin position="1"/>
        <end position="21"/>
    </location>
</feature>
<feature type="chain" id="PRO_0000309550" description="Glycosyltransferase 25 family member">
    <location>
        <begin position="22"/>
        <end position="626"/>
    </location>
</feature>
<feature type="short sequence motif" description="Prevents secretion from ER" evidence="2">
    <location>
        <begin position="623"/>
        <end position="626"/>
    </location>
</feature>
<feature type="glycosylation site" description="N-linked (GlcNAc...) asparagine" evidence="1">
    <location>
        <position position="113"/>
    </location>
</feature>
<feature type="glycosylation site" description="N-linked (GlcNAc...) asparagine" evidence="1">
    <location>
        <position position="234"/>
    </location>
</feature>
<feature type="glycosylation site" description="N-linked (GlcNAc...) asparagine" evidence="1">
    <location>
        <position position="272"/>
    </location>
</feature>
<feature type="glycosylation site" description="N-linked (GlcNAc...) asparagine" evidence="1">
    <location>
        <position position="533"/>
    </location>
</feature>
<keyword id="KW-0256">Endoplasmic reticulum</keyword>
<keyword id="KW-0325">Glycoprotein</keyword>
<keyword id="KW-0328">Glycosyltransferase</keyword>
<keyword id="KW-1185">Reference proteome</keyword>
<keyword id="KW-0732">Signal</keyword>
<keyword id="KW-0808">Transferase</keyword>